<proteinExistence type="evidence at transcript level"/>
<comment type="function">
    <text evidence="2">Might be required to be present in the virion for transcription of early genes after primo infection.</text>
</comment>
<comment type="subcellular location">
    <subcellularLocation>
        <location evidence="2">Virion</location>
    </subcellularLocation>
    <subcellularLocation>
        <location evidence="2">Host cytoplasm</location>
    </subcellularLocation>
    <text>Localizes in cytoplasmic virus factories and present in the virion core.</text>
</comment>
<comment type="induction">
    <text evidence="2 3">Expressed in the late phase of the viral replicative cycle.</text>
</comment>
<comment type="similarity">
    <text evidence="4">Belongs to the orthopoxvirus OPG097 family.</text>
</comment>
<name>PG097_VACCW</name>
<gene>
    <name type="primary">OPG097</name>
    <name type="ordered locus">VACWR090</name>
    <name type="ORF">F4</name>
</gene>
<sequence length="350" mass="40621">MNTRTDVTNDNIDKNPTKRGDKNIPGRNERFNDQNRFNNDIPKPKPRLQPNQPPKQDNKCREENGDFINIRLCAYEKEYCNDGYLSPAYYMLKQVDDEEMSCWSELSSLVRSRKAVGFPLLKAAKRISHGSMLYFEQFKNSKVVRLTPQVKCLNDTVIFQTVVILYSMYKRGIYSNEFCFDLVSIPRTNIVFSVNQLMFNICTDILVVLSICGNRLYRTNLPQSCYLNFIHGHETIARRGYEHSNYFFEWLIKNHISLLTKQTMDILKVKKKYAIGAPVNRLLEPGTLVYVPKEDYYFIGISLTDVSISDNVRVLFSTDGIVLEIEDFNIKHLFMAGEMFVRSQSSTIIV</sequence>
<organismHost>
    <name type="scientific">Bos taurus</name>
    <name type="common">Bovine</name>
    <dbReference type="NCBI Taxonomy" id="9913"/>
</organismHost>
<dbReference type="EMBL" id="X01978">
    <property type="protein sequence ID" value="CAA26012.1"/>
    <property type="molecule type" value="Genomic_DNA"/>
</dbReference>
<dbReference type="EMBL" id="AY243312">
    <property type="protein sequence ID" value="AAO89369.1"/>
    <property type="molecule type" value="Genomic_DNA"/>
</dbReference>
<dbReference type="PIR" id="A26216">
    <property type="entry name" value="QQVZF4"/>
</dbReference>
<dbReference type="DNASU" id="3707546"/>
<dbReference type="KEGG" id="vg:3707546"/>
<dbReference type="Proteomes" id="UP000000344">
    <property type="component" value="Genome"/>
</dbReference>
<dbReference type="GO" id="GO:0030430">
    <property type="term" value="C:host cell cytoplasm"/>
    <property type="evidence" value="ECO:0007669"/>
    <property type="project" value="UniProtKB-SubCell"/>
</dbReference>
<dbReference type="GO" id="GO:0044423">
    <property type="term" value="C:virion component"/>
    <property type="evidence" value="ECO:0007669"/>
    <property type="project" value="UniProtKB-KW"/>
</dbReference>
<dbReference type="InterPro" id="IPR005007">
    <property type="entry name" value="Poxvirus_L3/FP4"/>
</dbReference>
<dbReference type="Pfam" id="PF03339">
    <property type="entry name" value="Pox_L3_FP4"/>
    <property type="match status" value="1"/>
</dbReference>
<evidence type="ECO:0000256" key="1">
    <source>
        <dbReference type="SAM" id="MobiDB-lite"/>
    </source>
</evidence>
<evidence type="ECO:0000269" key="2">
    <source>
    </source>
</evidence>
<evidence type="ECO:0000269" key="3">
    <source>
    </source>
</evidence>
<evidence type="ECO:0000305" key="4"/>
<accession>P07614</accession>
<accession>Q76ZT6</accession>
<reference key="1">
    <citation type="journal article" date="1985" name="Nucleic Acids Res.">
        <title>Nucleotide sequence of a cluster of early and late genes in a conserved segment of the vaccinia virus genome.</title>
        <authorList>
            <person name="Plucienniczak A."/>
            <person name="Schroeder E."/>
            <person name="Zettlmeissl G."/>
            <person name="Streeck R.E."/>
        </authorList>
    </citation>
    <scope>NUCLEOTIDE SEQUENCE [GENOMIC DNA]</scope>
</reference>
<reference key="2">
    <citation type="submission" date="2003-02" db="EMBL/GenBank/DDBJ databases">
        <title>Sequencing of the coding region of Vaccinia-WR to an average 9-fold redundancy and an error rate of 0.16/10kb.</title>
        <authorList>
            <person name="Esposito J.J."/>
            <person name="Frace A.M."/>
            <person name="Sammons S.A."/>
            <person name="Olsen-Rasmussen M."/>
            <person name="Osborne J."/>
            <person name="Wohlhueter R."/>
        </authorList>
    </citation>
    <scope>NUCLEOTIDE SEQUENCE [LARGE SCALE GENOMIC DNA]</scope>
</reference>
<reference key="3">
    <citation type="journal article" date="2005" name="J. Virol.">
        <title>The conserved poxvirus L3 virion protein is required for transcription of vaccinia virus early genes.</title>
        <authorList>
            <person name="Resch W."/>
            <person name="Moss B."/>
        </authorList>
    </citation>
    <scope>FUNCTION</scope>
    <scope>SUBCELLULAR LOCATION</scope>
    <scope>INDUCTION</scope>
</reference>
<reference key="4">
    <citation type="journal article" date="2015" name="J. Virol.">
        <title>Deciphering poxvirus gene expression by RNA sequencing and ribosome profiling.</title>
        <authorList>
            <person name="Yang Z."/>
            <person name="Cao S."/>
            <person name="Martens C.A."/>
            <person name="Porcella S.F."/>
            <person name="Xie Z."/>
            <person name="Ma M."/>
            <person name="Shen B."/>
            <person name="Moss B."/>
        </authorList>
    </citation>
    <scope>INDUCTION</scope>
</reference>
<organism>
    <name type="scientific">Vaccinia virus (strain Western Reserve)</name>
    <name type="common">VACV</name>
    <name type="synonym">Vaccinia virus (strain WR)</name>
    <dbReference type="NCBI Taxonomy" id="10254"/>
    <lineage>
        <taxon>Viruses</taxon>
        <taxon>Varidnaviria</taxon>
        <taxon>Bamfordvirae</taxon>
        <taxon>Nucleocytoviricota</taxon>
        <taxon>Pokkesviricetes</taxon>
        <taxon>Chitovirales</taxon>
        <taxon>Poxviridae</taxon>
        <taxon>Chordopoxvirinae</taxon>
        <taxon>Orthopoxvirus</taxon>
        <taxon>Vaccinia virus</taxon>
    </lineage>
</organism>
<keyword id="KW-1035">Host cytoplasm</keyword>
<keyword id="KW-0426">Late protein</keyword>
<keyword id="KW-1185">Reference proteome</keyword>
<keyword id="KW-0946">Virion</keyword>
<feature type="chain" id="PRO_0000099622" description="Protein OPG097">
    <location>
        <begin position="1"/>
        <end position="350"/>
    </location>
</feature>
<feature type="region of interest" description="Disordered" evidence="1">
    <location>
        <begin position="1"/>
        <end position="61"/>
    </location>
</feature>
<feature type="compositionally biased region" description="Polar residues" evidence="1">
    <location>
        <begin position="1"/>
        <end position="10"/>
    </location>
</feature>
<feature type="compositionally biased region" description="Basic and acidic residues" evidence="1">
    <location>
        <begin position="11"/>
        <end position="33"/>
    </location>
</feature>
<protein>
    <recommendedName>
        <fullName>Protein OPG097</fullName>
    </recommendedName>
    <alternativeName>
        <fullName>Protein F4</fullName>
    </alternativeName>
    <alternativeName>
        <fullName>Protein L3</fullName>
    </alternativeName>
</protein>